<reference key="1">
    <citation type="journal article" date="2009" name="PLoS Biol.">
        <title>Lineage-specific biology revealed by a finished genome assembly of the mouse.</title>
        <authorList>
            <person name="Church D.M."/>
            <person name="Goodstadt L."/>
            <person name="Hillier L.W."/>
            <person name="Zody M.C."/>
            <person name="Goldstein S."/>
            <person name="She X."/>
            <person name="Bult C.J."/>
            <person name="Agarwala R."/>
            <person name="Cherry J.L."/>
            <person name="DiCuccio M."/>
            <person name="Hlavina W."/>
            <person name="Kapustin Y."/>
            <person name="Meric P."/>
            <person name="Maglott D."/>
            <person name="Birtle Z."/>
            <person name="Marques A.C."/>
            <person name="Graves T."/>
            <person name="Zhou S."/>
            <person name="Teague B."/>
            <person name="Potamousis K."/>
            <person name="Churas C."/>
            <person name="Place M."/>
            <person name="Herschleb J."/>
            <person name="Runnheim R."/>
            <person name="Forrest D."/>
            <person name="Amos-Landgraf J."/>
            <person name="Schwartz D.C."/>
            <person name="Cheng Z."/>
            <person name="Lindblad-Toh K."/>
            <person name="Eichler E.E."/>
            <person name="Ponting C.P."/>
        </authorList>
    </citation>
    <scope>NUCLEOTIDE SEQUENCE [LARGE SCALE GENOMIC DNA]</scope>
    <source>
        <strain>C57BL/6J</strain>
    </source>
</reference>
<reference key="2">
    <citation type="submission" date="2005-07" db="EMBL/GenBank/DDBJ databases">
        <authorList>
            <person name="Mural R.J."/>
            <person name="Adams M.D."/>
            <person name="Myers E.W."/>
            <person name="Smith H.O."/>
            <person name="Venter J.C."/>
        </authorList>
    </citation>
    <scope>NUCLEOTIDE SEQUENCE [LARGE SCALE GENOMIC DNA]</scope>
</reference>
<reference key="3">
    <citation type="journal article" date="2004" name="Genome Res.">
        <title>The status, quality, and expansion of the NIH full-length cDNA project: the Mammalian Gene Collection (MGC).</title>
        <authorList>
            <consortium name="The MGC Project Team"/>
        </authorList>
    </citation>
    <scope>NUCLEOTIDE SEQUENCE [LARGE SCALE MRNA]</scope>
    <source>
        <tissue>Brain</tissue>
    </source>
</reference>
<feature type="chain" id="PRO_0000394663" description="Heat shock factor-binding protein 1-like protein 1">
    <location>
        <begin position="1"/>
        <end position="72"/>
    </location>
</feature>
<feature type="coiled-coil region" evidence="1">
    <location>
        <begin position="12"/>
        <end position="62"/>
    </location>
</feature>
<comment type="similarity">
    <text evidence="2">Belongs to the HSBP1 family.</text>
</comment>
<proteinExistence type="inferred from homology"/>
<organism>
    <name type="scientific">Mus musculus</name>
    <name type="common">Mouse</name>
    <dbReference type="NCBI Taxonomy" id="10090"/>
    <lineage>
        <taxon>Eukaryota</taxon>
        <taxon>Metazoa</taxon>
        <taxon>Chordata</taxon>
        <taxon>Craniata</taxon>
        <taxon>Vertebrata</taxon>
        <taxon>Euteleostomi</taxon>
        <taxon>Mammalia</taxon>
        <taxon>Eutheria</taxon>
        <taxon>Euarchontoglires</taxon>
        <taxon>Glires</taxon>
        <taxon>Rodentia</taxon>
        <taxon>Myomorpha</taxon>
        <taxon>Muroidea</taxon>
        <taxon>Muridae</taxon>
        <taxon>Murinae</taxon>
        <taxon>Mus</taxon>
        <taxon>Mus</taxon>
    </lineage>
</organism>
<keyword id="KW-0175">Coiled coil</keyword>
<keyword id="KW-1185">Reference proteome</keyword>
<name>HSBPL_MOUSE</name>
<protein>
    <recommendedName>
        <fullName>Heat shock factor-binding protein 1-like protein 1</fullName>
    </recommendedName>
</protein>
<dbReference type="EMBL" id="AC131065">
    <property type="status" value="NOT_ANNOTATED_CDS"/>
    <property type="molecule type" value="Genomic_DNA"/>
</dbReference>
<dbReference type="EMBL" id="CH466528">
    <property type="protein sequence ID" value="EDL09411.1"/>
    <property type="molecule type" value="Genomic_DNA"/>
</dbReference>
<dbReference type="EMBL" id="BC151118">
    <property type="protein sequence ID" value="AAI51119.1"/>
    <property type="molecule type" value="mRNA"/>
</dbReference>
<dbReference type="EMBL" id="BC151120">
    <property type="protein sequence ID" value="AAI51121.1"/>
    <property type="molecule type" value="mRNA"/>
</dbReference>
<dbReference type="CCDS" id="CCDS50333.1"/>
<dbReference type="RefSeq" id="NP_001129653.1">
    <property type="nucleotide sequence ID" value="NM_001136181.1"/>
</dbReference>
<dbReference type="RefSeq" id="XP_006526580.1">
    <property type="nucleotide sequence ID" value="XM_006526517.5"/>
</dbReference>
<dbReference type="RefSeq" id="XP_006526581.1">
    <property type="nucleotide sequence ID" value="XM_006526518.5"/>
</dbReference>
<dbReference type="SMR" id="B2RXB2"/>
<dbReference type="BioGRID" id="211330">
    <property type="interactions" value="1"/>
</dbReference>
<dbReference type="FunCoup" id="B2RXB2">
    <property type="interactions" value="364"/>
</dbReference>
<dbReference type="STRING" id="10090.ENSMUSP00000132852"/>
<dbReference type="PhosphoSitePlus" id="B2RXB2"/>
<dbReference type="PaxDb" id="10090-ENSMUSP00000132852"/>
<dbReference type="Antibodypedia" id="62785">
    <property type="antibodies" value="5 antibodies from 5 providers"/>
</dbReference>
<dbReference type="Ensembl" id="ENSMUST00000166219.2">
    <property type="protein sequence ID" value="ENSMUSP00000132852.2"/>
    <property type="gene ID" value="ENSMUSG00000078963.4"/>
</dbReference>
<dbReference type="Ensembl" id="ENSMUST00000237192.2">
    <property type="protein sequence ID" value="ENSMUSP00000158095.2"/>
    <property type="gene ID" value="ENSMUSG00000078963.4"/>
</dbReference>
<dbReference type="GeneID" id="66255"/>
<dbReference type="KEGG" id="mmu:66255"/>
<dbReference type="UCSC" id="uc008fss.2">
    <property type="organism name" value="mouse"/>
</dbReference>
<dbReference type="AGR" id="MGI:1913505"/>
<dbReference type="CTD" id="440498"/>
<dbReference type="MGI" id="MGI:1913505">
    <property type="gene designation" value="Hsbp1l1"/>
</dbReference>
<dbReference type="VEuPathDB" id="HostDB:ENSMUSG00000078963"/>
<dbReference type="eggNOG" id="ENOG502SE6P">
    <property type="taxonomic scope" value="Eukaryota"/>
</dbReference>
<dbReference type="GeneTree" id="ENSGT00550000076117"/>
<dbReference type="HOGENOM" id="CLU_149552_4_0_1"/>
<dbReference type="InParanoid" id="B2RXB2"/>
<dbReference type="OMA" id="MEEMGHR"/>
<dbReference type="OrthoDB" id="4159489at2759"/>
<dbReference type="PhylomeDB" id="B2RXB2"/>
<dbReference type="BioGRID-ORCS" id="66255">
    <property type="hits" value="1 hit in 74 CRISPR screens"/>
</dbReference>
<dbReference type="PRO" id="PR:B2RXB2"/>
<dbReference type="Proteomes" id="UP000000589">
    <property type="component" value="Chromosome 18"/>
</dbReference>
<dbReference type="RNAct" id="B2RXB2">
    <property type="molecule type" value="protein"/>
</dbReference>
<dbReference type="Bgee" id="ENSMUSG00000078963">
    <property type="expression patterns" value="Expressed in lumbar dorsal root ganglion and 88 other cell types or tissues"/>
</dbReference>
<dbReference type="GO" id="GO:0003714">
    <property type="term" value="F:transcription corepressor activity"/>
    <property type="evidence" value="ECO:0007669"/>
    <property type="project" value="InterPro"/>
</dbReference>
<dbReference type="Gene3D" id="1.20.5.430">
    <property type="match status" value="1"/>
</dbReference>
<dbReference type="InterPro" id="IPR009643">
    <property type="entry name" value="HS1-bd"/>
</dbReference>
<dbReference type="PANTHER" id="PTHR19424">
    <property type="entry name" value="HEAT SHOCK FACTOR BINDING PROTEIN 1"/>
    <property type="match status" value="1"/>
</dbReference>
<dbReference type="PANTHER" id="PTHR19424:SF4">
    <property type="entry name" value="HEAT SHOCK FACTOR-BINDING PROTEIN 1-LIKE PROTEIN 1"/>
    <property type="match status" value="1"/>
</dbReference>
<dbReference type="Pfam" id="PF06825">
    <property type="entry name" value="HSBP1"/>
    <property type="match status" value="1"/>
</dbReference>
<evidence type="ECO:0000255" key="1"/>
<evidence type="ECO:0000305" key="2"/>
<sequence length="72" mass="8101">MDTRTPEVPCGDLLQNAAENLLLEVEEHFQALTTTLNLRMEEMGSRIEDLQRNVDDLMTQAGIENSIKEPAT</sequence>
<gene>
    <name type="primary">Hsbp1l1</name>
</gene>
<accession>B2RXB2</accession>